<keyword id="KW-0386">Hypusine biosynthesis</keyword>
<keyword id="KW-0408">Iron</keyword>
<keyword id="KW-0479">Metal-binding</keyword>
<keyword id="KW-0503">Monooxygenase</keyword>
<keyword id="KW-0560">Oxidoreductase</keyword>
<keyword id="KW-1185">Reference proteome</keyword>
<keyword id="KW-0677">Repeat</keyword>
<reference key="1">
    <citation type="journal article" date="2005" name="BMC Biol.">
        <title>The sequence of rice chromosomes 11 and 12, rich in disease resistance genes and recent gene duplications.</title>
        <authorList>
            <consortium name="The rice chromosomes 11 and 12 sequencing consortia"/>
        </authorList>
    </citation>
    <scope>NUCLEOTIDE SEQUENCE [LARGE SCALE GENOMIC DNA]</scope>
    <source>
        <strain>cv. Nipponbare</strain>
    </source>
</reference>
<reference key="2">
    <citation type="journal article" date="2005" name="Nature">
        <title>The map-based sequence of the rice genome.</title>
        <authorList>
            <consortium name="International rice genome sequencing project (IRGSP)"/>
        </authorList>
    </citation>
    <scope>NUCLEOTIDE SEQUENCE [LARGE SCALE GENOMIC DNA]</scope>
    <source>
        <strain>cv. Nipponbare</strain>
    </source>
</reference>
<reference key="3">
    <citation type="journal article" date="2008" name="Nucleic Acids Res.">
        <title>The rice annotation project database (RAP-DB): 2008 update.</title>
        <authorList>
            <consortium name="The rice annotation project (RAP)"/>
        </authorList>
    </citation>
    <scope>GENOME REANNOTATION</scope>
    <source>
        <strain>cv. Nipponbare</strain>
    </source>
</reference>
<reference key="4">
    <citation type="journal article" date="2013" name="Rice">
        <title>Improvement of the Oryza sativa Nipponbare reference genome using next generation sequence and optical map data.</title>
        <authorList>
            <person name="Kawahara Y."/>
            <person name="de la Bastide M."/>
            <person name="Hamilton J.P."/>
            <person name="Kanamori H."/>
            <person name="McCombie W.R."/>
            <person name="Ouyang S."/>
            <person name="Schwartz D.C."/>
            <person name="Tanaka T."/>
            <person name="Wu J."/>
            <person name="Zhou S."/>
            <person name="Childs K.L."/>
            <person name="Davidson R.M."/>
            <person name="Lin H."/>
            <person name="Quesada-Ocampo L."/>
            <person name="Vaillancourt B."/>
            <person name="Sakai H."/>
            <person name="Lee S.S."/>
            <person name="Kim J."/>
            <person name="Numa H."/>
            <person name="Itoh T."/>
            <person name="Buell C.R."/>
            <person name="Matsumoto T."/>
        </authorList>
    </citation>
    <scope>GENOME REANNOTATION</scope>
    <source>
        <strain>cv. Nipponbare</strain>
    </source>
</reference>
<reference key="5">
    <citation type="journal article" date="2003" name="Science">
        <title>Collection, mapping, and annotation of over 28,000 cDNA clones from japonica rice.</title>
        <authorList>
            <consortium name="The rice full-length cDNA consortium"/>
        </authorList>
    </citation>
    <scope>NUCLEOTIDE SEQUENCE [LARGE SCALE MRNA]</scope>
    <source>
        <strain>cv. Nipponbare</strain>
    </source>
</reference>
<sequence>MEGFLCDRLLDAAQPIAERFRALFSLRNLRGDAPRRALLQAARDSSNLLAHEAAFALGQMQDAEAIPALEAVLKDLSLHPIVRHEAAEALGAIGLEKSISLLEESLAVDPAVEVQETCELAIRRIEEQKNTSGVESATVSPFLSVDPALPAKQGLPVEQLRELLLNEQESMYERYAALFALRNDSGDAAVSAIVAALGVKSALLRHEVAYVLGQLQNKAASDALSTVLKNVDEHPMVRHEAAEALGSIADQESIALLEEFAKDPEPIVSQSCEVALSMLEYERSGKAFEFLFPQTPQVQQES</sequence>
<protein>
    <recommendedName>
        <fullName evidence="1">Deoxyhypusine hydroxylase-B</fullName>
        <shortName evidence="1">DOHH-B</shortName>
        <ecNumber evidence="1">1.14.99.29</ecNumber>
    </recommendedName>
    <alternativeName>
        <fullName evidence="1">Deoxyhypusine dioxygenase-B</fullName>
    </alternativeName>
    <alternativeName>
        <fullName evidence="1">Deoxyhypusine monooxygenase-B</fullName>
    </alternativeName>
</protein>
<comment type="function">
    <text evidence="1">Catalyzes the hydroxylation of the N(6)-(4-aminobutyl)-L-lysine intermediate to form hypusine, an essential post-translational modification only found in mature eIF-5A factor.</text>
</comment>
<comment type="catalytic activity">
    <reaction evidence="1">
        <text>[eIF5A protein]-deoxyhypusine + AH2 + O2 = [eIF5A protein]-hypusine + A + H2O</text>
        <dbReference type="Rhea" id="RHEA:14101"/>
        <dbReference type="Rhea" id="RHEA-COMP:10144"/>
        <dbReference type="Rhea" id="RHEA-COMP:12592"/>
        <dbReference type="ChEBI" id="CHEBI:13193"/>
        <dbReference type="ChEBI" id="CHEBI:15377"/>
        <dbReference type="ChEBI" id="CHEBI:15379"/>
        <dbReference type="ChEBI" id="CHEBI:17499"/>
        <dbReference type="ChEBI" id="CHEBI:82657"/>
        <dbReference type="ChEBI" id="CHEBI:91175"/>
        <dbReference type="EC" id="1.14.99.29"/>
    </reaction>
</comment>
<comment type="cofactor">
    <cofactor evidence="1">
        <name>Fe(2+)</name>
        <dbReference type="ChEBI" id="CHEBI:29033"/>
    </cofactor>
    <text evidence="1">Binds 2 Fe(2+) ions per subunit.</text>
</comment>
<comment type="pathway">
    <text evidence="1">Protein modification; eIF5A hypusination.</text>
</comment>
<comment type="similarity">
    <text evidence="1">Belongs to the deoxyhypusine hydroxylase family.</text>
</comment>
<evidence type="ECO:0000255" key="1">
    <source>
        <dbReference type="HAMAP-Rule" id="MF_03101"/>
    </source>
</evidence>
<accession>Q2QLW3</accession>
<organism>
    <name type="scientific">Oryza sativa subsp. japonica</name>
    <name type="common">Rice</name>
    <dbReference type="NCBI Taxonomy" id="39947"/>
    <lineage>
        <taxon>Eukaryota</taxon>
        <taxon>Viridiplantae</taxon>
        <taxon>Streptophyta</taxon>
        <taxon>Embryophyta</taxon>
        <taxon>Tracheophyta</taxon>
        <taxon>Spermatophyta</taxon>
        <taxon>Magnoliopsida</taxon>
        <taxon>Liliopsida</taxon>
        <taxon>Poales</taxon>
        <taxon>Poaceae</taxon>
        <taxon>BOP clade</taxon>
        <taxon>Oryzoideae</taxon>
        <taxon>Oryzeae</taxon>
        <taxon>Oryzinae</taxon>
        <taxon>Oryza</taxon>
        <taxon>Oryza sativa</taxon>
    </lineage>
</organism>
<dbReference type="EC" id="1.14.99.29" evidence="1"/>
<dbReference type="EMBL" id="DP000011">
    <property type="protein sequence ID" value="ABA99491.1"/>
    <property type="molecule type" value="Genomic_DNA"/>
</dbReference>
<dbReference type="EMBL" id="AP008218">
    <property type="status" value="NOT_ANNOTATED_CDS"/>
    <property type="molecule type" value="Genomic_DNA"/>
</dbReference>
<dbReference type="EMBL" id="AP014968">
    <property type="status" value="NOT_ANNOTATED_CDS"/>
    <property type="molecule type" value="Genomic_DNA"/>
</dbReference>
<dbReference type="EMBL" id="AK059924">
    <property type="status" value="NOT_ANNOTATED_CDS"/>
    <property type="molecule type" value="mRNA"/>
</dbReference>
<dbReference type="RefSeq" id="XP_015618592.1">
    <property type="nucleotide sequence ID" value="XM_015763106.1"/>
</dbReference>
<dbReference type="SMR" id="Q2QLW3"/>
<dbReference type="FunCoup" id="Q2QLW3">
    <property type="interactions" value="2162"/>
</dbReference>
<dbReference type="STRING" id="39947.Q2QLW3"/>
<dbReference type="PaxDb" id="39947-Q2QLW3"/>
<dbReference type="eggNOG" id="KOG0567">
    <property type="taxonomic scope" value="Eukaryota"/>
</dbReference>
<dbReference type="HOGENOM" id="CLU_053974_0_0_1"/>
<dbReference type="InParanoid" id="Q2QLW3"/>
<dbReference type="OrthoDB" id="421002at2759"/>
<dbReference type="UniPathway" id="UPA00354"/>
<dbReference type="Proteomes" id="UP000000763">
    <property type="component" value="Chromosome 12"/>
</dbReference>
<dbReference type="Proteomes" id="UP000059680">
    <property type="component" value="Chromosome 12"/>
</dbReference>
<dbReference type="GO" id="GO:0019135">
    <property type="term" value="F:deoxyhypusine monooxygenase activity"/>
    <property type="evidence" value="ECO:0000250"/>
    <property type="project" value="UniProtKB"/>
</dbReference>
<dbReference type="GO" id="GO:0046872">
    <property type="term" value="F:metal ion binding"/>
    <property type="evidence" value="ECO:0007669"/>
    <property type="project" value="UniProtKB-KW"/>
</dbReference>
<dbReference type="GO" id="GO:0016491">
    <property type="term" value="F:oxidoreductase activity"/>
    <property type="evidence" value="ECO:0000318"/>
    <property type="project" value="GO_Central"/>
</dbReference>
<dbReference type="GO" id="GO:0008612">
    <property type="term" value="P:peptidyl-lysine modification to peptidyl-hypusine"/>
    <property type="evidence" value="ECO:0000250"/>
    <property type="project" value="UniProtKB"/>
</dbReference>
<dbReference type="FunFam" id="1.25.10.10:FF:000099">
    <property type="entry name" value="Deoxyhypusine hydroxylase"/>
    <property type="match status" value="1"/>
</dbReference>
<dbReference type="FunFam" id="1.25.10.10:FF:000292">
    <property type="entry name" value="Deoxyhypusine hydroxylase"/>
    <property type="match status" value="1"/>
</dbReference>
<dbReference type="Gene3D" id="1.25.10.10">
    <property type="entry name" value="Leucine-rich Repeat Variant"/>
    <property type="match status" value="2"/>
</dbReference>
<dbReference type="HAMAP" id="MF_03101">
    <property type="entry name" value="Deoxyhypusine_hydroxylase"/>
    <property type="match status" value="1"/>
</dbReference>
<dbReference type="InterPro" id="IPR011989">
    <property type="entry name" value="ARM-like"/>
</dbReference>
<dbReference type="InterPro" id="IPR016024">
    <property type="entry name" value="ARM-type_fold"/>
</dbReference>
<dbReference type="InterPro" id="IPR027517">
    <property type="entry name" value="Deoxyhypusine_hydroxylase"/>
</dbReference>
<dbReference type="InterPro" id="IPR004155">
    <property type="entry name" value="PBS_lyase_HEAT"/>
</dbReference>
<dbReference type="PANTHER" id="PTHR12697:SF5">
    <property type="entry name" value="DEOXYHYPUSINE HYDROXYLASE"/>
    <property type="match status" value="1"/>
</dbReference>
<dbReference type="PANTHER" id="PTHR12697">
    <property type="entry name" value="PBS LYASE HEAT-LIKE PROTEIN"/>
    <property type="match status" value="1"/>
</dbReference>
<dbReference type="Pfam" id="PF13646">
    <property type="entry name" value="HEAT_2"/>
    <property type="match status" value="2"/>
</dbReference>
<dbReference type="SMART" id="SM00567">
    <property type="entry name" value="EZ_HEAT"/>
    <property type="match status" value="6"/>
</dbReference>
<dbReference type="SUPFAM" id="SSF48371">
    <property type="entry name" value="ARM repeat"/>
    <property type="match status" value="1"/>
</dbReference>
<proteinExistence type="evidence at transcript level"/>
<gene>
    <name type="ordered locus">Os12g0626100</name>
    <name type="ordered locus">LOC_Os12g43100</name>
</gene>
<feature type="chain" id="PRO_0000248586" description="Deoxyhypusine hydroxylase-B">
    <location>
        <begin position="1"/>
        <end position="302"/>
    </location>
</feature>
<feature type="repeat" description="HEAT-like PBS-type 1">
    <location>
        <begin position="49"/>
        <end position="75"/>
    </location>
</feature>
<feature type="repeat" description="HEAT-like PBS-type 2">
    <location>
        <begin position="82"/>
        <end position="108"/>
    </location>
</feature>
<feature type="repeat" description="HEAT-like PBS-type 3">
    <location>
        <begin position="171"/>
        <end position="200"/>
    </location>
</feature>
<feature type="repeat" description="HEAT-like PBS-type 4">
    <location>
        <begin position="204"/>
        <end position="230"/>
    </location>
</feature>
<feature type="repeat" description="HEAT-like PBS-type 5">
    <location>
        <begin position="237"/>
        <end position="263"/>
    </location>
</feature>
<feature type="binding site" evidence="1">
    <location>
        <position position="51"/>
    </location>
    <ligand>
        <name>Fe cation</name>
        <dbReference type="ChEBI" id="CHEBI:24875"/>
        <label>1</label>
    </ligand>
</feature>
<feature type="binding site" evidence="1">
    <location>
        <position position="52"/>
    </location>
    <ligand>
        <name>Fe cation</name>
        <dbReference type="ChEBI" id="CHEBI:24875"/>
        <label>1</label>
    </ligand>
</feature>
<feature type="binding site" evidence="1">
    <location>
        <position position="84"/>
    </location>
    <ligand>
        <name>Fe cation</name>
        <dbReference type="ChEBI" id="CHEBI:24875"/>
        <label>1</label>
    </ligand>
</feature>
<feature type="binding site" evidence="1">
    <location>
        <position position="85"/>
    </location>
    <ligand>
        <name>Fe cation</name>
        <dbReference type="ChEBI" id="CHEBI:24875"/>
        <label>1</label>
    </ligand>
</feature>
<feature type="binding site" evidence="1">
    <location>
        <position position="206"/>
    </location>
    <ligand>
        <name>Fe cation</name>
        <dbReference type="ChEBI" id="CHEBI:24875"/>
        <label>2</label>
    </ligand>
</feature>
<feature type="binding site" evidence="1">
    <location>
        <position position="207"/>
    </location>
    <ligand>
        <name>Fe cation</name>
        <dbReference type="ChEBI" id="CHEBI:24875"/>
        <label>2</label>
    </ligand>
</feature>
<feature type="binding site" evidence="1">
    <location>
        <position position="239"/>
    </location>
    <ligand>
        <name>Fe cation</name>
        <dbReference type="ChEBI" id="CHEBI:24875"/>
        <label>2</label>
    </ligand>
</feature>
<feature type="binding site" evidence="1">
    <location>
        <position position="240"/>
    </location>
    <ligand>
        <name>Fe cation</name>
        <dbReference type="ChEBI" id="CHEBI:24875"/>
        <label>2</label>
    </ligand>
</feature>
<name>DOHH2_ORYSJ</name>